<proteinExistence type="inferred from homology"/>
<feature type="chain" id="PRO_0000279627" description="Polymerase basic protein 2">
    <location>
        <begin position="1"/>
        <end position="759"/>
    </location>
</feature>
<feature type="short sequence motif" description="Nuclear localization signal" evidence="1">
    <location>
        <begin position="736"/>
        <end position="739"/>
    </location>
</feature>
<feature type="site" description="Avian adaptation" evidence="1">
    <location>
        <position position="627"/>
    </location>
</feature>
<evidence type="ECO:0000255" key="1">
    <source>
        <dbReference type="HAMAP-Rule" id="MF_04062"/>
    </source>
</evidence>
<comment type="function">
    <text evidence="1">Plays an essential role in transcription initiation and cap-stealing mechanism, in which cellular capped pre-mRNAs are used to generate primers for viral transcription. Recognizes and binds the 7-methylguanosine-containing cap of the target pre-RNA which is subsequently cleaved after 10-13 nucleotides by the viral protein PA. Plays a role in the initiation of the viral genome replication and modulates the activity of the ribonucleoprotein (RNP) complex.</text>
</comment>
<comment type="subunit">
    <text evidence="1">Influenza RNA polymerase is composed of three subunits: PB1, PB2 and PA. Interacts (via N-terminus) with PB1 (via C-terminus). Interacts with nucleoprotein NP (via N-terminus).</text>
</comment>
<comment type="subcellular location">
    <subcellularLocation>
        <location evidence="1">Virion</location>
    </subcellularLocation>
    <subcellularLocation>
        <location evidence="1">Host nucleus</location>
    </subcellularLocation>
</comment>
<comment type="similarity">
    <text evidence="1">Belongs to the influenza viruses PB2 family.</text>
</comment>
<organismHost>
    <name type="scientific">Aves</name>
    <dbReference type="NCBI Taxonomy" id="8782"/>
</organismHost>
<gene>
    <name evidence="1" type="primary">PB2</name>
</gene>
<protein>
    <recommendedName>
        <fullName evidence="1">Polymerase basic protein 2</fullName>
    </recommendedName>
    <alternativeName>
        <fullName evidence="1">RNA-directed RNA polymerase subunit P3</fullName>
    </alternativeName>
</protein>
<reference key="1">
    <citation type="journal article" date="2006" name="Science">
        <title>Large-scale sequence analysis of avian influenza isolates.</title>
        <authorList>
            <person name="Obenauer J.C."/>
            <person name="Denson J."/>
            <person name="Mehta P.K."/>
            <person name="Su X."/>
            <person name="Mukatira S."/>
            <person name="Finkelstein D.B."/>
            <person name="Xu X."/>
            <person name="Wang J."/>
            <person name="Ma J."/>
            <person name="Fan Y."/>
            <person name="Rakestraw K.M."/>
            <person name="Webster R.G."/>
            <person name="Hoffmann E."/>
            <person name="Krauss S."/>
            <person name="Zheng J."/>
            <person name="Zhang Z."/>
            <person name="Naeve C.W."/>
        </authorList>
    </citation>
    <scope>NUCLEOTIDE SEQUENCE [GENOMIC RNA]</scope>
</reference>
<dbReference type="EMBL" id="CY014686">
    <property type="protein sequence ID" value="ABI84555.1"/>
    <property type="molecule type" value="Genomic_RNA"/>
</dbReference>
<dbReference type="SMR" id="Q0A427"/>
<dbReference type="PRO" id="PR:Q0A427"/>
<dbReference type="Proteomes" id="UP000155465">
    <property type="component" value="Genome"/>
</dbReference>
<dbReference type="GO" id="GO:0042025">
    <property type="term" value="C:host cell nucleus"/>
    <property type="evidence" value="ECO:0007669"/>
    <property type="project" value="UniProtKB-SubCell"/>
</dbReference>
<dbReference type="GO" id="GO:0044423">
    <property type="term" value="C:virion component"/>
    <property type="evidence" value="ECO:0007669"/>
    <property type="project" value="UniProtKB-UniRule"/>
</dbReference>
<dbReference type="GO" id="GO:0003723">
    <property type="term" value="F:RNA binding"/>
    <property type="evidence" value="ECO:0007669"/>
    <property type="project" value="UniProtKB-UniRule"/>
</dbReference>
<dbReference type="GO" id="GO:0003968">
    <property type="term" value="F:RNA-directed RNA polymerase activity"/>
    <property type="evidence" value="ECO:0007669"/>
    <property type="project" value="UniProtKB-UniRule"/>
</dbReference>
<dbReference type="GO" id="GO:0006370">
    <property type="term" value="P:7-methylguanosine mRNA capping"/>
    <property type="evidence" value="ECO:0007669"/>
    <property type="project" value="UniProtKB-UniRule"/>
</dbReference>
<dbReference type="GO" id="GO:0075526">
    <property type="term" value="P:cap snatching"/>
    <property type="evidence" value="ECO:0007669"/>
    <property type="project" value="UniProtKB-UniRule"/>
</dbReference>
<dbReference type="GO" id="GO:0006351">
    <property type="term" value="P:DNA-templated transcription"/>
    <property type="evidence" value="ECO:0007669"/>
    <property type="project" value="UniProtKB-UniRule"/>
</dbReference>
<dbReference type="GO" id="GO:0039657">
    <property type="term" value="P:symbiont-mediated suppression of host gene expression"/>
    <property type="evidence" value="ECO:0007669"/>
    <property type="project" value="UniProtKB-KW"/>
</dbReference>
<dbReference type="GO" id="GO:0039523">
    <property type="term" value="P:symbiont-mediated suppression of host mRNA transcription via inhibition of RNA polymerase II activity"/>
    <property type="evidence" value="ECO:0007669"/>
    <property type="project" value="UniProtKB-UniRule"/>
</dbReference>
<dbReference type="GO" id="GO:0039694">
    <property type="term" value="P:viral RNA genome replication"/>
    <property type="evidence" value="ECO:0007669"/>
    <property type="project" value="InterPro"/>
</dbReference>
<dbReference type="FunFam" id="3.30.30.90:FF:000001">
    <property type="entry name" value="Polymerase basic protein 2"/>
    <property type="match status" value="1"/>
</dbReference>
<dbReference type="Gene3D" id="3.30.30.90">
    <property type="entry name" value="Polymerase Basic Protein 2, C-terminal domain"/>
    <property type="match status" value="1"/>
</dbReference>
<dbReference type="HAMAP" id="MF_04062">
    <property type="entry name" value="INV_PB2"/>
    <property type="match status" value="1"/>
</dbReference>
<dbReference type="InterPro" id="IPR049110">
    <property type="entry name" value="Flu_PB2_2nd"/>
</dbReference>
<dbReference type="InterPro" id="IPR049114">
    <property type="entry name" value="Flu_PB2_6th"/>
</dbReference>
<dbReference type="InterPro" id="IPR049115">
    <property type="entry name" value="Flu_PB2_C"/>
</dbReference>
<dbReference type="InterPro" id="IPR048298">
    <property type="entry name" value="Flu_PB2_CAP-bd"/>
</dbReference>
<dbReference type="InterPro" id="IPR049111">
    <property type="entry name" value="Flu_PB2_middle"/>
</dbReference>
<dbReference type="InterPro" id="IPR049106">
    <property type="entry name" value="Flu_PB2_N"/>
</dbReference>
<dbReference type="InterPro" id="IPR001591">
    <property type="entry name" value="INV_PB2"/>
</dbReference>
<dbReference type="InterPro" id="IPR049113">
    <property type="entry name" value="PB2_helical"/>
</dbReference>
<dbReference type="InterPro" id="IPR037258">
    <property type="entry name" value="PDB2_C"/>
</dbReference>
<dbReference type="Pfam" id="PF20947">
    <property type="entry name" value="Flu_PB2_1st"/>
    <property type="match status" value="1"/>
</dbReference>
<dbReference type="Pfam" id="PF20948">
    <property type="entry name" value="Flu_PB2_2nd"/>
    <property type="match status" value="1"/>
</dbReference>
<dbReference type="Pfam" id="PF20949">
    <property type="entry name" value="Flu_PB2_3rd"/>
    <property type="match status" value="1"/>
</dbReference>
<dbReference type="Pfam" id="PF20950">
    <property type="entry name" value="Flu_PB2_4th"/>
    <property type="match status" value="1"/>
</dbReference>
<dbReference type="Pfam" id="PF00604">
    <property type="entry name" value="Flu_PB2_5th"/>
    <property type="match status" value="1"/>
</dbReference>
<dbReference type="Pfam" id="PF20951">
    <property type="entry name" value="Flu_PB2_6th"/>
    <property type="match status" value="1"/>
</dbReference>
<dbReference type="Pfam" id="PF20952">
    <property type="entry name" value="Flu_PB2_7th"/>
    <property type="match status" value="1"/>
</dbReference>
<dbReference type="SUPFAM" id="SSF160453">
    <property type="entry name" value="PB2 C-terminal domain-like"/>
    <property type="match status" value="1"/>
</dbReference>
<keyword id="KW-1157">Cap snatching</keyword>
<keyword id="KW-1262">Eukaryotic host gene expression shutoff by virus</keyword>
<keyword id="KW-1191">Eukaryotic host transcription shutoff by virus</keyword>
<keyword id="KW-1190">Host gene expression shutoff by virus</keyword>
<keyword id="KW-1048">Host nucleus</keyword>
<keyword id="KW-0945">Host-virus interaction</keyword>
<keyword id="KW-1104">Inhibition of host RNA polymerase II by virus</keyword>
<keyword id="KW-0506">mRNA capping</keyword>
<keyword id="KW-0507">mRNA processing</keyword>
<keyword id="KW-1195">Viral transcription</keyword>
<keyword id="KW-0946">Virion</keyword>
<organism>
    <name type="scientific">Influenza A virus (strain A/Duck/England/1/1956 H11N6)</name>
    <dbReference type="NCBI Taxonomy" id="383550"/>
    <lineage>
        <taxon>Viruses</taxon>
        <taxon>Riboviria</taxon>
        <taxon>Orthornavirae</taxon>
        <taxon>Negarnaviricota</taxon>
        <taxon>Polyploviricotina</taxon>
        <taxon>Insthoviricetes</taxon>
        <taxon>Articulavirales</taxon>
        <taxon>Orthomyxoviridae</taxon>
        <taxon>Alphainfluenzavirus</taxon>
        <taxon>Alphainfluenzavirus influenzae</taxon>
        <taxon>Influenza A virus</taxon>
    </lineage>
</organism>
<name>PB2_I56A2</name>
<sequence length="759" mass="85848">MERIKELRDLMSQSRTREILTKTTVDHMAIIKKYTSGRQEKNPALRMKWMMAMKYPITADKRIMEMIPERNEQGQTLWSKTNDAGSDRVMVSPLAVTWWNRNGPTTSTVHYPKVYKTYFEKVERLKHGTFGPVHFRNQVKIRRRVDINPGHADLSAKEAQDVIMEVVFPNEVGARILTSESQLTITKEKKEELQDCKIAPLMVAYMLERELVRKTRFLPVAGGTSSVYIEVLHLTQGTCWEQMYTPGGEVRNDDVDQSLIVAARNIVRRATVSADPLASLLEMCHSTQIGGVRMVDILRQNPTEEQAVDICKAAMGLRISSSFSFGGFTFKRTSGSSVKREEEVLTGNLQTLKIRVHEGYEEFTMVGRRATAILRKATRRLIQLIVSGRDEQSIAEAIIVAMVFSQEDCMIKAVRGDLNFVNRANQRLNPMHQLLRHFQKDAKVLFQNWGIEPIDNVMGMIGILPDMTPSTEMSLRGVRVSKMGVDEYSSTERVVVSIDRFLRVRDQRGNVLLSPEEVSETQGTEKLTITYSSSMMWEINGPESVLVNTYQWIIRNWETVKIQWSQDPTVLYNKMEFEPFQSLVPKAARGQYSGFVRTLFQQMRDVLGTFDTVQIIKLLPFAAAPPEQSRMQFSSLTVNVRGSGMRILVRGNSPVFNYNKATKRLTVLGKDAGALTEDPDEGTAGVESAVLRGFLILGKEDKRYGPALSINELSNLAKGEKANVLIGQGDVVLVMKRKRDSSILTDSQTATKRIRMAIN</sequence>
<accession>Q0A427</accession>